<protein>
    <recommendedName>
        <fullName evidence="1">Histidine ammonia-lyase</fullName>
        <shortName evidence="1">Histidase</shortName>
        <ecNumber evidence="1">4.3.1.3</ecNumber>
    </recommendedName>
</protein>
<organism>
    <name type="scientific">Geobacillus thermodenitrificans (strain NG80-2)</name>
    <dbReference type="NCBI Taxonomy" id="420246"/>
    <lineage>
        <taxon>Bacteria</taxon>
        <taxon>Bacillati</taxon>
        <taxon>Bacillota</taxon>
        <taxon>Bacilli</taxon>
        <taxon>Bacillales</taxon>
        <taxon>Anoxybacillaceae</taxon>
        <taxon>Geobacillus</taxon>
    </lineage>
</organism>
<comment type="catalytic activity">
    <reaction evidence="1">
        <text>L-histidine = trans-urocanate + NH4(+)</text>
        <dbReference type="Rhea" id="RHEA:21232"/>
        <dbReference type="ChEBI" id="CHEBI:17771"/>
        <dbReference type="ChEBI" id="CHEBI:28938"/>
        <dbReference type="ChEBI" id="CHEBI:57595"/>
        <dbReference type="EC" id="4.3.1.3"/>
    </reaction>
</comment>
<comment type="pathway">
    <text evidence="1">Amino-acid degradation; L-histidine degradation into L-glutamate; N-formimidoyl-L-glutamate from L-histidine: step 1/3.</text>
</comment>
<comment type="subcellular location">
    <subcellularLocation>
        <location evidence="1">Cytoplasm</location>
    </subcellularLocation>
</comment>
<comment type="PTM">
    <text evidence="1">Contains an active site 4-methylidene-imidazol-5-one (MIO), which is formed autocatalytically by cyclization and dehydration of residues Ala-Ser-Gly.</text>
</comment>
<comment type="similarity">
    <text evidence="1">Belongs to the PAL/histidase family.</text>
</comment>
<proteinExistence type="inferred from homology"/>
<accession>A4IK90</accession>
<dbReference type="EC" id="4.3.1.3" evidence="1"/>
<dbReference type="EMBL" id="CP000557">
    <property type="protein sequence ID" value="ABO65744.1"/>
    <property type="molecule type" value="Genomic_DNA"/>
</dbReference>
<dbReference type="RefSeq" id="WP_008881230.1">
    <property type="nucleotide sequence ID" value="NC_009328.1"/>
</dbReference>
<dbReference type="SMR" id="A4IK90"/>
<dbReference type="GeneID" id="87622030"/>
<dbReference type="KEGG" id="gtn:GTNG_0362"/>
<dbReference type="eggNOG" id="COG2986">
    <property type="taxonomic scope" value="Bacteria"/>
</dbReference>
<dbReference type="HOGENOM" id="CLU_014801_4_0_9"/>
<dbReference type="UniPathway" id="UPA00379">
    <property type="reaction ID" value="UER00549"/>
</dbReference>
<dbReference type="Proteomes" id="UP000001578">
    <property type="component" value="Chromosome"/>
</dbReference>
<dbReference type="GO" id="GO:0005737">
    <property type="term" value="C:cytoplasm"/>
    <property type="evidence" value="ECO:0007669"/>
    <property type="project" value="UniProtKB-SubCell"/>
</dbReference>
<dbReference type="GO" id="GO:0004397">
    <property type="term" value="F:histidine ammonia-lyase activity"/>
    <property type="evidence" value="ECO:0007669"/>
    <property type="project" value="UniProtKB-UniRule"/>
</dbReference>
<dbReference type="GO" id="GO:0019556">
    <property type="term" value="P:L-histidine catabolic process to glutamate and formamide"/>
    <property type="evidence" value="ECO:0007669"/>
    <property type="project" value="UniProtKB-UniPathway"/>
</dbReference>
<dbReference type="GO" id="GO:0019557">
    <property type="term" value="P:L-histidine catabolic process to glutamate and formate"/>
    <property type="evidence" value="ECO:0007669"/>
    <property type="project" value="UniProtKB-UniPathway"/>
</dbReference>
<dbReference type="CDD" id="cd00332">
    <property type="entry name" value="PAL-HAL"/>
    <property type="match status" value="1"/>
</dbReference>
<dbReference type="FunFam" id="1.10.275.10:FF:000005">
    <property type="entry name" value="Histidine ammonia-lyase"/>
    <property type="match status" value="1"/>
</dbReference>
<dbReference type="FunFam" id="1.20.200.10:FF:000003">
    <property type="entry name" value="Histidine ammonia-lyase"/>
    <property type="match status" value="1"/>
</dbReference>
<dbReference type="Gene3D" id="1.20.200.10">
    <property type="entry name" value="Fumarase/aspartase (Central domain)"/>
    <property type="match status" value="1"/>
</dbReference>
<dbReference type="Gene3D" id="1.10.275.10">
    <property type="entry name" value="Fumarase/aspartase (N-terminal domain)"/>
    <property type="match status" value="1"/>
</dbReference>
<dbReference type="HAMAP" id="MF_00229">
    <property type="entry name" value="His_ammonia_lyase"/>
    <property type="match status" value="1"/>
</dbReference>
<dbReference type="InterPro" id="IPR001106">
    <property type="entry name" value="Aromatic_Lyase"/>
</dbReference>
<dbReference type="InterPro" id="IPR024083">
    <property type="entry name" value="Fumarase/histidase_N"/>
</dbReference>
<dbReference type="InterPro" id="IPR005921">
    <property type="entry name" value="HutH"/>
</dbReference>
<dbReference type="InterPro" id="IPR008948">
    <property type="entry name" value="L-Aspartase-like"/>
</dbReference>
<dbReference type="InterPro" id="IPR022313">
    <property type="entry name" value="Phe/His_NH3-lyase_AS"/>
</dbReference>
<dbReference type="NCBIfam" id="TIGR01225">
    <property type="entry name" value="hutH"/>
    <property type="match status" value="1"/>
</dbReference>
<dbReference type="NCBIfam" id="NF006871">
    <property type="entry name" value="PRK09367.1"/>
    <property type="match status" value="1"/>
</dbReference>
<dbReference type="PANTHER" id="PTHR10362">
    <property type="entry name" value="HISTIDINE AMMONIA-LYASE"/>
    <property type="match status" value="1"/>
</dbReference>
<dbReference type="Pfam" id="PF00221">
    <property type="entry name" value="Lyase_aromatic"/>
    <property type="match status" value="1"/>
</dbReference>
<dbReference type="SUPFAM" id="SSF48557">
    <property type="entry name" value="L-aspartase-like"/>
    <property type="match status" value="1"/>
</dbReference>
<dbReference type="PROSITE" id="PS00488">
    <property type="entry name" value="PAL_HISTIDASE"/>
    <property type="match status" value="1"/>
</dbReference>
<name>HUTH_GEOTN</name>
<reference key="1">
    <citation type="journal article" date="2007" name="Proc. Natl. Acad. Sci. U.S.A.">
        <title>Genome and proteome of long-chain alkane degrading Geobacillus thermodenitrificans NG80-2 isolated from a deep-subsurface oil reservoir.</title>
        <authorList>
            <person name="Feng L."/>
            <person name="Wang W."/>
            <person name="Cheng J."/>
            <person name="Ren Y."/>
            <person name="Zhao G."/>
            <person name="Gao C."/>
            <person name="Tang Y."/>
            <person name="Liu X."/>
            <person name="Han W."/>
            <person name="Peng X."/>
            <person name="Liu R."/>
            <person name="Wang L."/>
        </authorList>
    </citation>
    <scope>NUCLEOTIDE SEQUENCE [LARGE SCALE GENOMIC DNA]</scope>
    <source>
        <strain>NG80-2</strain>
    </source>
</reference>
<gene>
    <name evidence="1" type="primary">hutH</name>
    <name type="ordered locus">GTNG_0362</name>
</gene>
<feature type="chain" id="PRO_1000021557" description="Histidine ammonia-lyase">
    <location>
        <begin position="1"/>
        <end position="504"/>
    </location>
</feature>
<feature type="modified residue" description="2,3-didehydroalanine (Ser)" evidence="1">
    <location>
        <position position="142"/>
    </location>
</feature>
<feature type="cross-link" description="5-imidazolinone (Ala-Gly)" evidence="1">
    <location>
        <begin position="141"/>
        <end position="143"/>
    </location>
</feature>
<keyword id="KW-0963">Cytoplasm</keyword>
<keyword id="KW-0369">Histidine metabolism</keyword>
<keyword id="KW-0456">Lyase</keyword>
<evidence type="ECO:0000255" key="1">
    <source>
        <dbReference type="HAMAP-Rule" id="MF_00229"/>
    </source>
</evidence>
<sequence length="504" mass="54432">MIVLTGHSLTIAEARRVIYDREPVAAALESMEAVRKSRAAVEQAIASGRTIYGVNTGFGKLADVRIDGSDLEQLQINLLRSHACAVGEPFAEEVVRAMLLLRANALLKGYSGIRPVVIERLLAFLNSGIHPIVPQQGSLGASGDLAPLAHLALALVGEGEVMYQGQRMPAIQALSQAGIPPLSLKEKEGLALINGTQAMTAMGVIAYLEAEQLAYDSEWIAALTIEALYGVIDAFDARIHEARGFLEQAEVAERLRRYLDGSQLITRQGERRVQDAYSIRCIPQVHGASLRALRYVKETLEIEMNAATDNPLIFADGAVLSGGNFHGQPVAIAMDLLKIAVAELANMSERRIERLVNPQLSEGLPPFLSPEPGLQSGAMIMQYVAASLVSENKTLAHPASVDSIPSSANQEDHVSMGTTAARHAYLIVQNVRKVLAIELICALQAVEERGIDQLAPSTSQLYHQARRIVPSIVADRVFSRDIEAVDAWLKQQAIRDRLAGGASV</sequence>